<gene>
    <name evidence="1" type="primary">rpsM</name>
    <name type="ordered locus">RP637</name>
</gene>
<comment type="function">
    <text evidence="1">Located at the top of the head of the 30S subunit, it contacts several helices of the 16S rRNA. In the 70S ribosome it contacts the 23S rRNA (bridge B1a) and protein L5 of the 50S subunit (bridge B1b), connecting the 2 subunits; these bridges are implicated in subunit movement. Contacts the tRNAs in the A and P-sites.</text>
</comment>
<comment type="subunit">
    <text evidence="1">Part of the 30S ribosomal subunit. Forms a loose heterodimer with protein S19. Forms two bridges to the 50S subunit in the 70S ribosome.</text>
</comment>
<comment type="similarity">
    <text evidence="1">Belongs to the universal ribosomal protein uS13 family.</text>
</comment>
<dbReference type="EMBL" id="AJ235272">
    <property type="protein sequence ID" value="CAA15077.1"/>
    <property type="molecule type" value="Genomic_DNA"/>
</dbReference>
<dbReference type="PIR" id="C71669">
    <property type="entry name" value="C71669"/>
</dbReference>
<dbReference type="RefSeq" id="NP_221001.1">
    <property type="nucleotide sequence ID" value="NC_000963.1"/>
</dbReference>
<dbReference type="RefSeq" id="WP_004596237.1">
    <property type="nucleotide sequence ID" value="NC_000963.1"/>
</dbReference>
<dbReference type="SMR" id="Q9ZCS7"/>
<dbReference type="STRING" id="272947.gene:17555714"/>
<dbReference type="EnsemblBacteria" id="CAA15077">
    <property type="protein sequence ID" value="CAA15077"/>
    <property type="gene ID" value="CAA15077"/>
</dbReference>
<dbReference type="GeneID" id="57569762"/>
<dbReference type="KEGG" id="rpr:RP637"/>
<dbReference type="PATRIC" id="fig|272947.5.peg.659"/>
<dbReference type="eggNOG" id="COG0099">
    <property type="taxonomic scope" value="Bacteria"/>
</dbReference>
<dbReference type="HOGENOM" id="CLU_103849_1_2_5"/>
<dbReference type="OrthoDB" id="9803610at2"/>
<dbReference type="Proteomes" id="UP000002480">
    <property type="component" value="Chromosome"/>
</dbReference>
<dbReference type="GO" id="GO:0005829">
    <property type="term" value="C:cytosol"/>
    <property type="evidence" value="ECO:0007669"/>
    <property type="project" value="TreeGrafter"/>
</dbReference>
<dbReference type="GO" id="GO:0015935">
    <property type="term" value="C:small ribosomal subunit"/>
    <property type="evidence" value="ECO:0007669"/>
    <property type="project" value="TreeGrafter"/>
</dbReference>
<dbReference type="GO" id="GO:0019843">
    <property type="term" value="F:rRNA binding"/>
    <property type="evidence" value="ECO:0007669"/>
    <property type="project" value="UniProtKB-UniRule"/>
</dbReference>
<dbReference type="GO" id="GO:0003735">
    <property type="term" value="F:structural constituent of ribosome"/>
    <property type="evidence" value="ECO:0007669"/>
    <property type="project" value="InterPro"/>
</dbReference>
<dbReference type="GO" id="GO:0000049">
    <property type="term" value="F:tRNA binding"/>
    <property type="evidence" value="ECO:0007669"/>
    <property type="project" value="UniProtKB-UniRule"/>
</dbReference>
<dbReference type="GO" id="GO:0006412">
    <property type="term" value="P:translation"/>
    <property type="evidence" value="ECO:0007669"/>
    <property type="project" value="UniProtKB-UniRule"/>
</dbReference>
<dbReference type="FunFam" id="1.10.8.50:FF:000001">
    <property type="entry name" value="30S ribosomal protein S13"/>
    <property type="match status" value="1"/>
</dbReference>
<dbReference type="Gene3D" id="1.10.8.50">
    <property type="match status" value="1"/>
</dbReference>
<dbReference type="Gene3D" id="4.10.910.10">
    <property type="entry name" value="30s ribosomal protein s13, domain 2"/>
    <property type="match status" value="1"/>
</dbReference>
<dbReference type="HAMAP" id="MF_01315">
    <property type="entry name" value="Ribosomal_uS13"/>
    <property type="match status" value="1"/>
</dbReference>
<dbReference type="InterPro" id="IPR027437">
    <property type="entry name" value="Rbsml_uS13_C"/>
</dbReference>
<dbReference type="InterPro" id="IPR001892">
    <property type="entry name" value="Ribosomal_uS13"/>
</dbReference>
<dbReference type="InterPro" id="IPR010979">
    <property type="entry name" value="Ribosomal_uS13-like_H2TH"/>
</dbReference>
<dbReference type="InterPro" id="IPR019980">
    <property type="entry name" value="Ribosomal_uS13_bac-type"/>
</dbReference>
<dbReference type="InterPro" id="IPR018269">
    <property type="entry name" value="Ribosomal_uS13_CS"/>
</dbReference>
<dbReference type="NCBIfam" id="TIGR03631">
    <property type="entry name" value="uS13_bact"/>
    <property type="match status" value="1"/>
</dbReference>
<dbReference type="PANTHER" id="PTHR10871">
    <property type="entry name" value="30S RIBOSOMAL PROTEIN S13/40S RIBOSOMAL PROTEIN S18"/>
    <property type="match status" value="1"/>
</dbReference>
<dbReference type="PANTHER" id="PTHR10871:SF1">
    <property type="entry name" value="SMALL RIBOSOMAL SUBUNIT PROTEIN US13M"/>
    <property type="match status" value="1"/>
</dbReference>
<dbReference type="Pfam" id="PF00416">
    <property type="entry name" value="Ribosomal_S13"/>
    <property type="match status" value="1"/>
</dbReference>
<dbReference type="PIRSF" id="PIRSF002134">
    <property type="entry name" value="Ribosomal_S13"/>
    <property type="match status" value="1"/>
</dbReference>
<dbReference type="SUPFAM" id="SSF46946">
    <property type="entry name" value="S13-like H2TH domain"/>
    <property type="match status" value="1"/>
</dbReference>
<dbReference type="PROSITE" id="PS00646">
    <property type="entry name" value="RIBOSOMAL_S13_1"/>
    <property type="match status" value="1"/>
</dbReference>
<dbReference type="PROSITE" id="PS50159">
    <property type="entry name" value="RIBOSOMAL_S13_2"/>
    <property type="match status" value="1"/>
</dbReference>
<proteinExistence type="inferred from homology"/>
<accession>Q9ZCS7</accession>
<reference key="1">
    <citation type="journal article" date="1998" name="Nature">
        <title>The genome sequence of Rickettsia prowazekii and the origin of mitochondria.</title>
        <authorList>
            <person name="Andersson S.G.E."/>
            <person name="Zomorodipour A."/>
            <person name="Andersson J.O."/>
            <person name="Sicheritz-Ponten T."/>
            <person name="Alsmark U.C.M."/>
            <person name="Podowski R.M."/>
            <person name="Naeslund A.K."/>
            <person name="Eriksson A.-S."/>
            <person name="Winkler H.H."/>
            <person name="Kurland C.G."/>
        </authorList>
    </citation>
    <scope>NUCLEOTIDE SEQUENCE [LARGE SCALE GENOMIC DNA]</scope>
    <source>
        <strain>Madrid E</strain>
    </source>
</reference>
<evidence type="ECO:0000255" key="1">
    <source>
        <dbReference type="HAMAP-Rule" id="MF_01315"/>
    </source>
</evidence>
<evidence type="ECO:0000305" key="2"/>
<protein>
    <recommendedName>
        <fullName evidence="1">Small ribosomal subunit protein uS13</fullName>
    </recommendedName>
    <alternativeName>
        <fullName evidence="2">30S ribosomal protein S13</fullName>
    </alternativeName>
</protein>
<sequence length="125" mass="14145">MARIASVNIPDNKRLVVSLTYIYGLGSTMAAEICNKAKISKDKKVKVLTDQELISLRNIIENEYKVEGDLKREVTLNIKKKKDIRCYQGLRHIRKLPVRGQNTHSNARTRKGKAIAIAGKKKTVK</sequence>
<feature type="chain" id="PRO_0000132128" description="Small ribosomal subunit protein uS13">
    <location>
        <begin position="1"/>
        <end position="125"/>
    </location>
</feature>
<name>RS13_RICPR</name>
<organism>
    <name type="scientific">Rickettsia prowazekii (strain Madrid E)</name>
    <dbReference type="NCBI Taxonomy" id="272947"/>
    <lineage>
        <taxon>Bacteria</taxon>
        <taxon>Pseudomonadati</taxon>
        <taxon>Pseudomonadota</taxon>
        <taxon>Alphaproteobacteria</taxon>
        <taxon>Rickettsiales</taxon>
        <taxon>Rickettsiaceae</taxon>
        <taxon>Rickettsieae</taxon>
        <taxon>Rickettsia</taxon>
        <taxon>typhus group</taxon>
    </lineage>
</organism>
<keyword id="KW-1185">Reference proteome</keyword>
<keyword id="KW-0687">Ribonucleoprotein</keyword>
<keyword id="KW-0689">Ribosomal protein</keyword>
<keyword id="KW-0694">RNA-binding</keyword>
<keyword id="KW-0699">rRNA-binding</keyword>
<keyword id="KW-0820">tRNA-binding</keyword>